<reference key="1">
    <citation type="submission" date="1997-04" db="EMBL/GenBank/DDBJ databases">
        <authorList>
            <person name="Denizot F."/>
        </authorList>
    </citation>
    <scope>NUCLEOTIDE SEQUENCE [GENOMIC DNA]</scope>
    <source>
        <strain>168</strain>
    </source>
</reference>
<reference key="2">
    <citation type="journal article" date="1997" name="Nature">
        <title>The complete genome sequence of the Gram-positive bacterium Bacillus subtilis.</title>
        <authorList>
            <person name="Kunst F."/>
            <person name="Ogasawara N."/>
            <person name="Moszer I."/>
            <person name="Albertini A.M."/>
            <person name="Alloni G."/>
            <person name="Azevedo V."/>
            <person name="Bertero M.G."/>
            <person name="Bessieres P."/>
            <person name="Bolotin A."/>
            <person name="Borchert S."/>
            <person name="Borriss R."/>
            <person name="Boursier L."/>
            <person name="Brans A."/>
            <person name="Braun M."/>
            <person name="Brignell S.C."/>
            <person name="Bron S."/>
            <person name="Brouillet S."/>
            <person name="Bruschi C.V."/>
            <person name="Caldwell B."/>
            <person name="Capuano V."/>
            <person name="Carter N.M."/>
            <person name="Choi S.-K."/>
            <person name="Codani J.-J."/>
            <person name="Connerton I.F."/>
            <person name="Cummings N.J."/>
            <person name="Daniel R.A."/>
            <person name="Denizot F."/>
            <person name="Devine K.M."/>
            <person name="Duesterhoeft A."/>
            <person name="Ehrlich S.D."/>
            <person name="Emmerson P.T."/>
            <person name="Entian K.-D."/>
            <person name="Errington J."/>
            <person name="Fabret C."/>
            <person name="Ferrari E."/>
            <person name="Foulger D."/>
            <person name="Fritz C."/>
            <person name="Fujita M."/>
            <person name="Fujita Y."/>
            <person name="Fuma S."/>
            <person name="Galizzi A."/>
            <person name="Galleron N."/>
            <person name="Ghim S.-Y."/>
            <person name="Glaser P."/>
            <person name="Goffeau A."/>
            <person name="Golightly E.J."/>
            <person name="Grandi G."/>
            <person name="Guiseppi G."/>
            <person name="Guy B.J."/>
            <person name="Haga K."/>
            <person name="Haiech J."/>
            <person name="Harwood C.R."/>
            <person name="Henaut A."/>
            <person name="Hilbert H."/>
            <person name="Holsappel S."/>
            <person name="Hosono S."/>
            <person name="Hullo M.-F."/>
            <person name="Itaya M."/>
            <person name="Jones L.-M."/>
            <person name="Joris B."/>
            <person name="Karamata D."/>
            <person name="Kasahara Y."/>
            <person name="Klaerr-Blanchard M."/>
            <person name="Klein C."/>
            <person name="Kobayashi Y."/>
            <person name="Koetter P."/>
            <person name="Koningstein G."/>
            <person name="Krogh S."/>
            <person name="Kumano M."/>
            <person name="Kurita K."/>
            <person name="Lapidus A."/>
            <person name="Lardinois S."/>
            <person name="Lauber J."/>
            <person name="Lazarevic V."/>
            <person name="Lee S.-M."/>
            <person name="Levine A."/>
            <person name="Liu H."/>
            <person name="Masuda S."/>
            <person name="Mauel C."/>
            <person name="Medigue C."/>
            <person name="Medina N."/>
            <person name="Mellado R.P."/>
            <person name="Mizuno M."/>
            <person name="Moestl D."/>
            <person name="Nakai S."/>
            <person name="Noback M."/>
            <person name="Noone D."/>
            <person name="O'Reilly M."/>
            <person name="Ogawa K."/>
            <person name="Ogiwara A."/>
            <person name="Oudega B."/>
            <person name="Park S.-H."/>
            <person name="Parro V."/>
            <person name="Pohl T.M."/>
            <person name="Portetelle D."/>
            <person name="Porwollik S."/>
            <person name="Prescott A.M."/>
            <person name="Presecan E."/>
            <person name="Pujic P."/>
            <person name="Purnelle B."/>
            <person name="Rapoport G."/>
            <person name="Rey M."/>
            <person name="Reynolds S."/>
            <person name="Rieger M."/>
            <person name="Rivolta C."/>
            <person name="Rocha E."/>
            <person name="Roche B."/>
            <person name="Rose M."/>
            <person name="Sadaie Y."/>
            <person name="Sato T."/>
            <person name="Scanlan E."/>
            <person name="Schleich S."/>
            <person name="Schroeter R."/>
            <person name="Scoffone F."/>
            <person name="Sekiguchi J."/>
            <person name="Sekowska A."/>
            <person name="Seror S.J."/>
            <person name="Serror P."/>
            <person name="Shin B.-S."/>
            <person name="Soldo B."/>
            <person name="Sorokin A."/>
            <person name="Tacconi E."/>
            <person name="Takagi T."/>
            <person name="Takahashi H."/>
            <person name="Takemaru K."/>
            <person name="Takeuchi M."/>
            <person name="Tamakoshi A."/>
            <person name="Tanaka T."/>
            <person name="Terpstra P."/>
            <person name="Tognoni A."/>
            <person name="Tosato V."/>
            <person name="Uchiyama S."/>
            <person name="Vandenbol M."/>
            <person name="Vannier F."/>
            <person name="Vassarotti A."/>
            <person name="Viari A."/>
            <person name="Wambutt R."/>
            <person name="Wedler E."/>
            <person name="Wedler H."/>
            <person name="Weitzenegger T."/>
            <person name="Winters P."/>
            <person name="Wipat A."/>
            <person name="Yamamoto H."/>
            <person name="Yamane K."/>
            <person name="Yasumoto K."/>
            <person name="Yata K."/>
            <person name="Yoshida K."/>
            <person name="Yoshikawa H.-F."/>
            <person name="Zumstein E."/>
            <person name="Yoshikawa H."/>
            <person name="Danchin A."/>
        </authorList>
    </citation>
    <scope>NUCLEOTIDE SEQUENCE [LARGE SCALE GENOMIC DNA]</scope>
    <source>
        <strain>168</strain>
    </source>
</reference>
<accession>O06987</accession>
<organism>
    <name type="scientific">Bacillus subtilis (strain 168)</name>
    <dbReference type="NCBI Taxonomy" id="224308"/>
    <lineage>
        <taxon>Bacteria</taxon>
        <taxon>Bacillati</taxon>
        <taxon>Bacillota</taxon>
        <taxon>Bacilli</taxon>
        <taxon>Bacillales</taxon>
        <taxon>Bacillaceae</taxon>
        <taxon>Bacillus</taxon>
    </lineage>
</organism>
<protein>
    <recommendedName>
        <fullName>Uncharacterized HTH-type transcriptional regulator YvdE</fullName>
    </recommendedName>
</protein>
<dbReference type="EMBL" id="Z94043">
    <property type="protein sequence ID" value="CAB08034.1"/>
    <property type="molecule type" value="Genomic_DNA"/>
</dbReference>
<dbReference type="EMBL" id="AL009126">
    <property type="protein sequence ID" value="CAB15468.1"/>
    <property type="molecule type" value="Genomic_DNA"/>
</dbReference>
<dbReference type="PIR" id="E70033">
    <property type="entry name" value="E70033"/>
</dbReference>
<dbReference type="RefSeq" id="WP_003242739.1">
    <property type="nucleotide sequence ID" value="NZ_OZ025638.1"/>
</dbReference>
<dbReference type="SMR" id="O06987"/>
<dbReference type="FunCoup" id="O06987">
    <property type="interactions" value="16"/>
</dbReference>
<dbReference type="STRING" id="224308.BSU34630"/>
<dbReference type="PaxDb" id="224308-BSU34630"/>
<dbReference type="DNASU" id="936460"/>
<dbReference type="EnsemblBacteria" id="CAB15468">
    <property type="protein sequence ID" value="CAB15468"/>
    <property type="gene ID" value="BSU_34630"/>
</dbReference>
<dbReference type="GeneID" id="936460"/>
<dbReference type="KEGG" id="bsu:BSU34630"/>
<dbReference type="PATRIC" id="fig|224308.179.peg.3750"/>
<dbReference type="eggNOG" id="COG1609">
    <property type="taxonomic scope" value="Bacteria"/>
</dbReference>
<dbReference type="InParanoid" id="O06987"/>
<dbReference type="OrthoDB" id="9796186at2"/>
<dbReference type="PhylomeDB" id="O06987"/>
<dbReference type="BioCyc" id="BSUB:BSU34630-MONOMER"/>
<dbReference type="Proteomes" id="UP000001570">
    <property type="component" value="Chromosome"/>
</dbReference>
<dbReference type="GO" id="GO:0003700">
    <property type="term" value="F:DNA-binding transcription factor activity"/>
    <property type="evidence" value="ECO:0000318"/>
    <property type="project" value="GO_Central"/>
</dbReference>
<dbReference type="GO" id="GO:0000976">
    <property type="term" value="F:transcription cis-regulatory region binding"/>
    <property type="evidence" value="ECO:0000318"/>
    <property type="project" value="GO_Central"/>
</dbReference>
<dbReference type="GO" id="GO:0006355">
    <property type="term" value="P:regulation of DNA-templated transcription"/>
    <property type="evidence" value="ECO:0000318"/>
    <property type="project" value="GO_Central"/>
</dbReference>
<dbReference type="CDD" id="cd01392">
    <property type="entry name" value="HTH_LacI"/>
    <property type="match status" value="1"/>
</dbReference>
<dbReference type="CDD" id="cd06297">
    <property type="entry name" value="PBP1_CcpA_TTHA0807"/>
    <property type="match status" value="1"/>
</dbReference>
<dbReference type="Gene3D" id="3.40.50.2300">
    <property type="match status" value="2"/>
</dbReference>
<dbReference type="Gene3D" id="1.10.260.40">
    <property type="entry name" value="lambda repressor-like DNA-binding domains"/>
    <property type="match status" value="1"/>
</dbReference>
<dbReference type="InterPro" id="IPR000843">
    <property type="entry name" value="HTH_LacI"/>
</dbReference>
<dbReference type="InterPro" id="IPR046335">
    <property type="entry name" value="LacI/GalR-like_sensor"/>
</dbReference>
<dbReference type="InterPro" id="IPR010982">
    <property type="entry name" value="Lambda_DNA-bd_dom_sf"/>
</dbReference>
<dbReference type="InterPro" id="IPR028082">
    <property type="entry name" value="Peripla_BP_I"/>
</dbReference>
<dbReference type="PANTHER" id="PTHR30146">
    <property type="entry name" value="LACI-RELATED TRANSCRIPTIONAL REPRESSOR"/>
    <property type="match status" value="1"/>
</dbReference>
<dbReference type="PANTHER" id="PTHR30146:SF154">
    <property type="entry name" value="TRANSCRIPTION REGULATOR, MEMBER OF GALR FAMILY"/>
    <property type="match status" value="1"/>
</dbReference>
<dbReference type="Pfam" id="PF00356">
    <property type="entry name" value="LacI"/>
    <property type="match status" value="1"/>
</dbReference>
<dbReference type="Pfam" id="PF13377">
    <property type="entry name" value="Peripla_BP_3"/>
    <property type="match status" value="1"/>
</dbReference>
<dbReference type="PRINTS" id="PR00036">
    <property type="entry name" value="HTHLACI"/>
</dbReference>
<dbReference type="SMART" id="SM00354">
    <property type="entry name" value="HTH_LACI"/>
    <property type="match status" value="1"/>
</dbReference>
<dbReference type="SUPFAM" id="SSF47413">
    <property type="entry name" value="lambda repressor-like DNA-binding domains"/>
    <property type="match status" value="1"/>
</dbReference>
<dbReference type="SUPFAM" id="SSF53822">
    <property type="entry name" value="Periplasmic binding protein-like I"/>
    <property type="match status" value="1"/>
</dbReference>
<dbReference type="PROSITE" id="PS00356">
    <property type="entry name" value="HTH_LACI_1"/>
    <property type="match status" value="1"/>
</dbReference>
<dbReference type="PROSITE" id="PS50932">
    <property type="entry name" value="HTH_LACI_2"/>
    <property type="match status" value="1"/>
</dbReference>
<evidence type="ECO:0000255" key="1">
    <source>
        <dbReference type="PROSITE-ProRule" id="PRU00111"/>
    </source>
</evidence>
<name>YVDE_BACSU</name>
<proteinExistence type="predicted"/>
<sequence>MATLSDVAKKANVSKMTVSRVINHPETVTDELKKLVHSAMKELNYIPNYAARALVQNRTQVVKLLILEEMDTTEPYYMNLLTGISRELDRNHYALQLVTRNSLNIGQCDGIIATGLRKNDFEGVIKAFEKPLVVFGQNEMGYDFIDVNNEKGTFMATRHVMGLGEREVVFFGIDLDEPFERAREQGYIRAMNKSFKKSNMFRIDNSSKKSECLARELLKSMDNQAAFVCASDRIALGVIRAAQSLGKRIPEDVAVTGNDGVFLDRISSPRLTTVRQPVVEMGEACAKMLLKKMNEDGAAQGSLFFEPELIVRESTL</sequence>
<keyword id="KW-0238">DNA-binding</keyword>
<keyword id="KW-1185">Reference proteome</keyword>
<keyword id="KW-0678">Repressor</keyword>
<keyword id="KW-0804">Transcription</keyword>
<keyword id="KW-0805">Transcription regulation</keyword>
<feature type="chain" id="PRO_0000108008" description="Uncharacterized HTH-type transcriptional regulator YvdE">
    <location>
        <begin position="1"/>
        <end position="316"/>
    </location>
</feature>
<feature type="domain" description="HTH lacI-type" evidence="1">
    <location>
        <begin position="1"/>
        <end position="56"/>
    </location>
</feature>
<feature type="DNA-binding region" description="H-T-H motif" evidence="1">
    <location>
        <begin position="4"/>
        <end position="23"/>
    </location>
</feature>
<gene>
    <name type="primary">yvdE</name>
    <name type="ordered locus">BSU34630</name>
</gene>